<comment type="function">
    <text evidence="1">Cleaves peptides in various proteins in a process that requires ATP hydrolysis. Has a chymotrypsin-like activity. Plays a major role in the degradation of misfolded proteins.</text>
</comment>
<comment type="catalytic activity">
    <reaction evidence="1">
        <text>Hydrolysis of proteins to small peptides in the presence of ATP and magnesium. alpha-casein is the usual test substrate. In the absence of ATP, only oligopeptides shorter than five residues are hydrolyzed (such as succinyl-Leu-Tyr-|-NHMec, and Leu-Tyr-Leu-|-Tyr-Trp, in which cleavage of the -Tyr-|-Leu- and -Tyr-|-Trp bonds also occurs).</text>
        <dbReference type="EC" id="3.4.21.92"/>
    </reaction>
</comment>
<comment type="subunit">
    <text evidence="1">Fourteen ClpP subunits assemble into 2 heptameric rings which stack back to back to give a disk-like structure with a central cavity, resembling the structure of eukaryotic proteasomes.</text>
</comment>
<comment type="subcellular location">
    <subcellularLocation>
        <location evidence="1">Cytoplasm</location>
    </subcellularLocation>
</comment>
<comment type="similarity">
    <text evidence="1">Belongs to the peptidase S14 family.</text>
</comment>
<protein>
    <recommendedName>
        <fullName evidence="1">ATP-dependent Clp protease proteolytic subunit</fullName>
        <ecNumber evidence="1">3.4.21.92</ecNumber>
    </recommendedName>
    <alternativeName>
        <fullName evidence="1">Endopeptidase Clp</fullName>
    </alternativeName>
</protein>
<gene>
    <name evidence="1" type="primary">clpP</name>
    <name type="ordered locus">XOO0932</name>
</gene>
<reference key="1">
    <citation type="journal article" date="2005" name="Jpn. Agric. Res. Q.">
        <title>Genome sequence of Xanthomonas oryzae pv. oryzae suggests contribution of large numbers of effector genes and insertion sequences to its race diversity.</title>
        <authorList>
            <person name="Ochiai H."/>
            <person name="Inoue Y."/>
            <person name="Takeya M."/>
            <person name="Sasaki A."/>
            <person name="Kaku H."/>
        </authorList>
    </citation>
    <scope>NUCLEOTIDE SEQUENCE [LARGE SCALE GENOMIC DNA]</scope>
    <source>
        <strain>MAFF 311018</strain>
    </source>
</reference>
<feature type="chain" id="PRO_0000236419" description="ATP-dependent Clp protease proteolytic subunit">
    <location>
        <begin position="1"/>
        <end position="208"/>
    </location>
</feature>
<feature type="active site" description="Nucleophile" evidence="1">
    <location>
        <position position="105"/>
    </location>
</feature>
<feature type="active site" evidence="1">
    <location>
        <position position="130"/>
    </location>
</feature>
<evidence type="ECO:0000255" key="1">
    <source>
        <dbReference type="HAMAP-Rule" id="MF_00444"/>
    </source>
</evidence>
<organism>
    <name type="scientific">Xanthomonas oryzae pv. oryzae (strain MAFF 311018)</name>
    <dbReference type="NCBI Taxonomy" id="342109"/>
    <lineage>
        <taxon>Bacteria</taxon>
        <taxon>Pseudomonadati</taxon>
        <taxon>Pseudomonadota</taxon>
        <taxon>Gammaproteobacteria</taxon>
        <taxon>Lysobacterales</taxon>
        <taxon>Lysobacteraceae</taxon>
        <taxon>Xanthomonas</taxon>
    </lineage>
</organism>
<sequence>MSIVTKALNLVPMVVEQTSRGERAYDIYSRLLKERLIFLVGPIDDHMANVIVAQLLFLEADNPEKDISIYINSPGGVVTAGMAIYDTMQYIKPDVSTICVGQAASMGALLLASGAAGKRYALPNSRVMIHQPLGGFQGQATDIDIHAREILTLRSRLNEILAKHTGQSLETIARDTERDNFKSAVDAQAYGLVDQVLERRPEESIQPS</sequence>
<proteinExistence type="inferred from homology"/>
<name>CLPP_XANOM</name>
<dbReference type="EC" id="3.4.21.92" evidence="1"/>
<dbReference type="EMBL" id="AP008229">
    <property type="protein sequence ID" value="BAE67687.1"/>
    <property type="molecule type" value="Genomic_DNA"/>
</dbReference>
<dbReference type="RefSeq" id="WP_002806026.1">
    <property type="nucleotide sequence ID" value="NC_007705.1"/>
</dbReference>
<dbReference type="SMR" id="Q2P6Z0"/>
<dbReference type="MEROPS" id="S14.001"/>
<dbReference type="GeneID" id="97509417"/>
<dbReference type="KEGG" id="xom:XOO0932"/>
<dbReference type="HOGENOM" id="CLU_058707_3_2_6"/>
<dbReference type="GO" id="GO:0005737">
    <property type="term" value="C:cytoplasm"/>
    <property type="evidence" value="ECO:0007669"/>
    <property type="project" value="UniProtKB-SubCell"/>
</dbReference>
<dbReference type="GO" id="GO:0009368">
    <property type="term" value="C:endopeptidase Clp complex"/>
    <property type="evidence" value="ECO:0007669"/>
    <property type="project" value="TreeGrafter"/>
</dbReference>
<dbReference type="GO" id="GO:0004176">
    <property type="term" value="F:ATP-dependent peptidase activity"/>
    <property type="evidence" value="ECO:0007669"/>
    <property type="project" value="InterPro"/>
</dbReference>
<dbReference type="GO" id="GO:0051117">
    <property type="term" value="F:ATPase binding"/>
    <property type="evidence" value="ECO:0007669"/>
    <property type="project" value="TreeGrafter"/>
</dbReference>
<dbReference type="GO" id="GO:0004252">
    <property type="term" value="F:serine-type endopeptidase activity"/>
    <property type="evidence" value="ECO:0007669"/>
    <property type="project" value="UniProtKB-UniRule"/>
</dbReference>
<dbReference type="GO" id="GO:0006515">
    <property type="term" value="P:protein quality control for misfolded or incompletely synthesized proteins"/>
    <property type="evidence" value="ECO:0007669"/>
    <property type="project" value="TreeGrafter"/>
</dbReference>
<dbReference type="CDD" id="cd07017">
    <property type="entry name" value="S14_ClpP_2"/>
    <property type="match status" value="1"/>
</dbReference>
<dbReference type="FunFam" id="3.90.226.10:FF:000001">
    <property type="entry name" value="ATP-dependent Clp protease proteolytic subunit"/>
    <property type="match status" value="1"/>
</dbReference>
<dbReference type="Gene3D" id="3.90.226.10">
    <property type="entry name" value="2-enoyl-CoA Hydratase, Chain A, domain 1"/>
    <property type="match status" value="1"/>
</dbReference>
<dbReference type="HAMAP" id="MF_00444">
    <property type="entry name" value="ClpP"/>
    <property type="match status" value="1"/>
</dbReference>
<dbReference type="InterPro" id="IPR001907">
    <property type="entry name" value="ClpP"/>
</dbReference>
<dbReference type="InterPro" id="IPR029045">
    <property type="entry name" value="ClpP/crotonase-like_dom_sf"/>
</dbReference>
<dbReference type="InterPro" id="IPR023562">
    <property type="entry name" value="ClpP/TepA"/>
</dbReference>
<dbReference type="InterPro" id="IPR033135">
    <property type="entry name" value="ClpP_His_AS"/>
</dbReference>
<dbReference type="InterPro" id="IPR018215">
    <property type="entry name" value="ClpP_Ser_AS"/>
</dbReference>
<dbReference type="NCBIfam" id="TIGR00493">
    <property type="entry name" value="clpP"/>
    <property type="match status" value="1"/>
</dbReference>
<dbReference type="NCBIfam" id="NF001368">
    <property type="entry name" value="PRK00277.1"/>
    <property type="match status" value="1"/>
</dbReference>
<dbReference type="NCBIfam" id="NF009205">
    <property type="entry name" value="PRK12553.1"/>
    <property type="match status" value="1"/>
</dbReference>
<dbReference type="PANTHER" id="PTHR10381">
    <property type="entry name" value="ATP-DEPENDENT CLP PROTEASE PROTEOLYTIC SUBUNIT"/>
    <property type="match status" value="1"/>
</dbReference>
<dbReference type="PANTHER" id="PTHR10381:SF70">
    <property type="entry name" value="ATP-DEPENDENT CLP PROTEASE PROTEOLYTIC SUBUNIT"/>
    <property type="match status" value="1"/>
</dbReference>
<dbReference type="Pfam" id="PF00574">
    <property type="entry name" value="CLP_protease"/>
    <property type="match status" value="1"/>
</dbReference>
<dbReference type="PRINTS" id="PR00127">
    <property type="entry name" value="CLPPROTEASEP"/>
</dbReference>
<dbReference type="SUPFAM" id="SSF52096">
    <property type="entry name" value="ClpP/crotonase"/>
    <property type="match status" value="1"/>
</dbReference>
<dbReference type="PROSITE" id="PS00382">
    <property type="entry name" value="CLP_PROTEASE_HIS"/>
    <property type="match status" value="1"/>
</dbReference>
<dbReference type="PROSITE" id="PS00381">
    <property type="entry name" value="CLP_PROTEASE_SER"/>
    <property type="match status" value="1"/>
</dbReference>
<keyword id="KW-0963">Cytoplasm</keyword>
<keyword id="KW-0378">Hydrolase</keyword>
<keyword id="KW-0645">Protease</keyword>
<keyword id="KW-0720">Serine protease</keyword>
<accession>Q2P6Z0</accession>